<accession>B7IT27</accession>
<dbReference type="EMBL" id="CP001186">
    <property type="protein sequence ID" value="ACK95508.1"/>
    <property type="molecule type" value="Genomic_DNA"/>
</dbReference>
<dbReference type="RefSeq" id="WP_000855718.1">
    <property type="nucleotide sequence ID" value="NC_011772.1"/>
</dbReference>
<dbReference type="SMR" id="B7IT27"/>
<dbReference type="GeneID" id="93010935"/>
<dbReference type="KEGG" id="bcg:BCG9842_B5187"/>
<dbReference type="HOGENOM" id="CLU_158491_5_2_9"/>
<dbReference type="Proteomes" id="UP000006744">
    <property type="component" value="Chromosome"/>
</dbReference>
<dbReference type="GO" id="GO:0022625">
    <property type="term" value="C:cytosolic large ribosomal subunit"/>
    <property type="evidence" value="ECO:0007669"/>
    <property type="project" value="TreeGrafter"/>
</dbReference>
<dbReference type="GO" id="GO:0003735">
    <property type="term" value="F:structural constituent of ribosome"/>
    <property type="evidence" value="ECO:0007669"/>
    <property type="project" value="InterPro"/>
</dbReference>
<dbReference type="GO" id="GO:0006412">
    <property type="term" value="P:translation"/>
    <property type="evidence" value="ECO:0007669"/>
    <property type="project" value="UniProtKB-UniRule"/>
</dbReference>
<dbReference type="CDD" id="cd00427">
    <property type="entry name" value="Ribosomal_L29_HIP"/>
    <property type="match status" value="1"/>
</dbReference>
<dbReference type="FunFam" id="1.10.287.310:FF:000001">
    <property type="entry name" value="50S ribosomal protein L29"/>
    <property type="match status" value="1"/>
</dbReference>
<dbReference type="Gene3D" id="1.10.287.310">
    <property type="match status" value="1"/>
</dbReference>
<dbReference type="HAMAP" id="MF_00374">
    <property type="entry name" value="Ribosomal_uL29"/>
    <property type="match status" value="1"/>
</dbReference>
<dbReference type="InterPro" id="IPR050063">
    <property type="entry name" value="Ribosomal_protein_uL29"/>
</dbReference>
<dbReference type="InterPro" id="IPR001854">
    <property type="entry name" value="Ribosomal_uL29"/>
</dbReference>
<dbReference type="InterPro" id="IPR018254">
    <property type="entry name" value="Ribosomal_uL29_CS"/>
</dbReference>
<dbReference type="InterPro" id="IPR036049">
    <property type="entry name" value="Ribosomal_uL29_sf"/>
</dbReference>
<dbReference type="NCBIfam" id="TIGR00012">
    <property type="entry name" value="L29"/>
    <property type="match status" value="1"/>
</dbReference>
<dbReference type="PANTHER" id="PTHR10916">
    <property type="entry name" value="60S RIBOSOMAL PROTEIN L35/50S RIBOSOMAL PROTEIN L29"/>
    <property type="match status" value="1"/>
</dbReference>
<dbReference type="PANTHER" id="PTHR10916:SF0">
    <property type="entry name" value="LARGE RIBOSOMAL SUBUNIT PROTEIN UL29C"/>
    <property type="match status" value="1"/>
</dbReference>
<dbReference type="Pfam" id="PF00831">
    <property type="entry name" value="Ribosomal_L29"/>
    <property type="match status" value="1"/>
</dbReference>
<dbReference type="SUPFAM" id="SSF46561">
    <property type="entry name" value="Ribosomal protein L29 (L29p)"/>
    <property type="match status" value="1"/>
</dbReference>
<dbReference type="PROSITE" id="PS00579">
    <property type="entry name" value="RIBOSOMAL_L29"/>
    <property type="match status" value="1"/>
</dbReference>
<organism>
    <name type="scientific">Bacillus cereus (strain G9842)</name>
    <dbReference type="NCBI Taxonomy" id="405531"/>
    <lineage>
        <taxon>Bacteria</taxon>
        <taxon>Bacillati</taxon>
        <taxon>Bacillota</taxon>
        <taxon>Bacilli</taxon>
        <taxon>Bacillales</taxon>
        <taxon>Bacillaceae</taxon>
        <taxon>Bacillus</taxon>
        <taxon>Bacillus cereus group</taxon>
    </lineage>
</organism>
<name>RL29_BACC2</name>
<gene>
    <name evidence="1" type="primary">rpmC</name>
    <name type="ordered locus">BCG9842_B5187</name>
</gene>
<proteinExistence type="inferred from homology"/>
<comment type="similarity">
    <text evidence="1">Belongs to the universal ribosomal protein uL29 family.</text>
</comment>
<reference key="1">
    <citation type="submission" date="2008-10" db="EMBL/GenBank/DDBJ databases">
        <title>Genome sequence of Bacillus cereus G9842.</title>
        <authorList>
            <person name="Dodson R.J."/>
            <person name="Durkin A.S."/>
            <person name="Rosovitz M.J."/>
            <person name="Rasko D.A."/>
            <person name="Hoffmaster A."/>
            <person name="Ravel J."/>
            <person name="Sutton G."/>
        </authorList>
    </citation>
    <scope>NUCLEOTIDE SEQUENCE [LARGE SCALE GENOMIC DNA]</scope>
    <source>
        <strain>G9842</strain>
    </source>
</reference>
<protein>
    <recommendedName>
        <fullName evidence="1">Large ribosomal subunit protein uL29</fullName>
    </recommendedName>
    <alternativeName>
        <fullName evidence="2">50S ribosomal protein L29</fullName>
    </alternativeName>
</protein>
<evidence type="ECO:0000255" key="1">
    <source>
        <dbReference type="HAMAP-Rule" id="MF_00374"/>
    </source>
</evidence>
<evidence type="ECO:0000305" key="2"/>
<sequence>MKTNDIRELTTAEIETKVKALKEELFNLRFQLATGQLENPTRIREVRKAIARMKTVVREREIGINR</sequence>
<keyword id="KW-0687">Ribonucleoprotein</keyword>
<keyword id="KW-0689">Ribosomal protein</keyword>
<feature type="chain" id="PRO_1000121729" description="Large ribosomal subunit protein uL29">
    <location>
        <begin position="1"/>
        <end position="66"/>
    </location>
</feature>